<protein>
    <recommendedName>
        <fullName>Conotoxin VnMKLT2-021</fullName>
    </recommendedName>
</protein>
<feature type="signal peptide" evidence="2">
    <location>
        <begin position="1"/>
        <end position="22"/>
    </location>
</feature>
<feature type="propeptide" id="PRO_0000404738" evidence="1">
    <location>
        <begin position="23"/>
        <end position="45"/>
    </location>
</feature>
<feature type="peptide" id="PRO_0000404739" description="Conotoxin VnMKLT2-021">
    <location>
        <begin position="48"/>
        <end position="72"/>
    </location>
</feature>
<feature type="region of interest" description="Disordered" evidence="3">
    <location>
        <begin position="25"/>
        <end position="44"/>
    </location>
</feature>
<feature type="disulfide bond" evidence="1">
    <location>
        <begin position="48"/>
        <end position="62"/>
    </location>
</feature>
<feature type="disulfide bond" evidence="1">
    <location>
        <begin position="55"/>
        <end position="66"/>
    </location>
</feature>
<feature type="disulfide bond" evidence="1">
    <location>
        <begin position="61"/>
        <end position="71"/>
    </location>
</feature>
<evidence type="ECO:0000250" key="1"/>
<evidence type="ECO:0000255" key="2"/>
<evidence type="ECO:0000256" key="3">
    <source>
        <dbReference type="SAM" id="MobiDB-lite"/>
    </source>
</evidence>
<evidence type="ECO:0000305" key="4"/>
<dbReference type="EMBL" id="AF215040">
    <property type="protein sequence ID" value="AAG60468.1"/>
    <property type="molecule type" value="mRNA"/>
</dbReference>
<dbReference type="SMR" id="Q9BP98"/>
<dbReference type="ConoServer" id="727">
    <property type="toxin name" value="Vn6.14 precursor"/>
</dbReference>
<dbReference type="GO" id="GO:0005576">
    <property type="term" value="C:extracellular region"/>
    <property type="evidence" value="ECO:0007669"/>
    <property type="project" value="UniProtKB-SubCell"/>
</dbReference>
<dbReference type="GO" id="GO:0008200">
    <property type="term" value="F:ion channel inhibitor activity"/>
    <property type="evidence" value="ECO:0007669"/>
    <property type="project" value="InterPro"/>
</dbReference>
<dbReference type="GO" id="GO:0090729">
    <property type="term" value="F:toxin activity"/>
    <property type="evidence" value="ECO:0007669"/>
    <property type="project" value="UniProtKB-KW"/>
</dbReference>
<dbReference type="InterPro" id="IPR004214">
    <property type="entry name" value="Conotoxin"/>
</dbReference>
<dbReference type="Pfam" id="PF02950">
    <property type="entry name" value="Conotoxin"/>
    <property type="match status" value="1"/>
</dbReference>
<name>O164B_CONVE</name>
<keyword id="KW-0165">Cleavage on pair of basic residues</keyword>
<keyword id="KW-1015">Disulfide bond</keyword>
<keyword id="KW-0960">Knottin</keyword>
<keyword id="KW-0528">Neurotoxin</keyword>
<keyword id="KW-0964">Secreted</keyword>
<keyword id="KW-0732">Signal</keyword>
<keyword id="KW-0800">Toxin</keyword>
<organism>
    <name type="scientific">Conus ventricosus</name>
    <name type="common">Mediterranean cone</name>
    <dbReference type="NCBI Taxonomy" id="117992"/>
    <lineage>
        <taxon>Eukaryota</taxon>
        <taxon>Metazoa</taxon>
        <taxon>Spiralia</taxon>
        <taxon>Lophotrochozoa</taxon>
        <taxon>Mollusca</taxon>
        <taxon>Gastropoda</taxon>
        <taxon>Caenogastropoda</taxon>
        <taxon>Neogastropoda</taxon>
        <taxon>Conoidea</taxon>
        <taxon>Conidae</taxon>
        <taxon>Conus</taxon>
        <taxon>Lautoconus</taxon>
    </lineage>
</organism>
<proteinExistence type="evidence at transcript level"/>
<sequence length="72" mass="7888">MKLTCVLIVAVLFLTACQLTTAASYARSEREHPDLGSSDQNSKLTKRCLASGETCWRDTSCCSFSCTNNVCF</sequence>
<comment type="subcellular location">
    <subcellularLocation>
        <location evidence="1">Secreted</location>
    </subcellularLocation>
</comment>
<comment type="tissue specificity">
    <text>Expressed by the venom duct.</text>
</comment>
<comment type="domain">
    <text evidence="1">The presence of a 'disulfide through disulfide knot' structurally defines this protein as a knottin.</text>
</comment>
<comment type="domain">
    <text>The cysteine framework is VI/VII (C-C-CC-C-C).</text>
</comment>
<comment type="similarity">
    <text evidence="4">Belongs to the conotoxin O1 superfamily.</text>
</comment>
<reference key="1">
    <citation type="journal article" date="2001" name="Mol. Biol. Evol.">
        <title>Mechanisms for evolving hypervariability: the case of conopeptides.</title>
        <authorList>
            <person name="Conticello S.G."/>
            <person name="Gilad Y."/>
            <person name="Avidan N."/>
            <person name="Ben-Asher E."/>
            <person name="Levy Z."/>
            <person name="Fainzilber M."/>
        </authorList>
    </citation>
    <scope>NUCLEOTIDE SEQUENCE [MRNA]</scope>
    <source>
        <tissue>Venom duct</tissue>
    </source>
</reference>
<accession>Q9BP98</accession>